<dbReference type="EMBL" id="CP000886">
    <property type="protein sequence ID" value="ABX70744.1"/>
    <property type="molecule type" value="Genomic_DNA"/>
</dbReference>
<dbReference type="RefSeq" id="WP_000208749.1">
    <property type="nucleotide sequence ID" value="NC_010102.1"/>
</dbReference>
<dbReference type="SMR" id="A9N410"/>
<dbReference type="KEGG" id="spq:SPAB_05472"/>
<dbReference type="PATRIC" id="fig|1016998.12.peg.5130"/>
<dbReference type="HOGENOM" id="CLU_156492_0_0_6"/>
<dbReference type="BioCyc" id="SENT1016998:SPAB_RS22315-MONOMER"/>
<dbReference type="Proteomes" id="UP000008556">
    <property type="component" value="Chromosome"/>
</dbReference>
<dbReference type="GO" id="GO:0045283">
    <property type="term" value="C:fumarate reductase complex"/>
    <property type="evidence" value="ECO:0007669"/>
    <property type="project" value="UniProtKB-UniRule"/>
</dbReference>
<dbReference type="GO" id="GO:0005886">
    <property type="term" value="C:plasma membrane"/>
    <property type="evidence" value="ECO:0007669"/>
    <property type="project" value="UniProtKB-SubCell"/>
</dbReference>
<dbReference type="GO" id="GO:0000104">
    <property type="term" value="F:succinate dehydrogenase activity"/>
    <property type="evidence" value="ECO:0007669"/>
    <property type="project" value="UniProtKB-UniRule"/>
</dbReference>
<dbReference type="CDD" id="cd00546">
    <property type="entry name" value="QFR_TypeD_subunitC"/>
    <property type="match status" value="1"/>
</dbReference>
<dbReference type="Gene3D" id="1.20.1300.10">
    <property type="entry name" value="Fumarate reductase/succinate dehydrogenase, transmembrane subunit"/>
    <property type="match status" value="1"/>
</dbReference>
<dbReference type="HAMAP" id="MF_00708">
    <property type="entry name" value="Fumarate_red_C"/>
    <property type="match status" value="1"/>
</dbReference>
<dbReference type="InterPro" id="IPR003510">
    <property type="entry name" value="Fumarate_red_C"/>
</dbReference>
<dbReference type="InterPro" id="IPR034804">
    <property type="entry name" value="SQR/QFR_C/D"/>
</dbReference>
<dbReference type="NCBIfam" id="NF003445">
    <property type="entry name" value="PRK04987.1"/>
    <property type="match status" value="1"/>
</dbReference>
<dbReference type="Pfam" id="PF02300">
    <property type="entry name" value="Fumarate_red_C"/>
    <property type="match status" value="1"/>
</dbReference>
<dbReference type="PIRSF" id="PIRSF000180">
    <property type="entry name" value="FrdC"/>
    <property type="match status" value="1"/>
</dbReference>
<dbReference type="SUPFAM" id="SSF81343">
    <property type="entry name" value="Fumarate reductase respiratory complex transmembrane subunits"/>
    <property type="match status" value="1"/>
</dbReference>
<feature type="chain" id="PRO_1000083198" description="Fumarate reductase subunit C">
    <location>
        <begin position="1"/>
        <end position="131"/>
    </location>
</feature>
<feature type="transmembrane region" description="Helical" evidence="1">
    <location>
        <begin position="30"/>
        <end position="50"/>
    </location>
</feature>
<feature type="transmembrane region" description="Helical" evidence="1">
    <location>
        <begin position="57"/>
        <end position="77"/>
    </location>
</feature>
<feature type="transmembrane region" description="Helical" evidence="1">
    <location>
        <begin position="109"/>
        <end position="129"/>
    </location>
</feature>
<protein>
    <recommendedName>
        <fullName evidence="1">Fumarate reductase subunit C</fullName>
    </recommendedName>
    <alternativeName>
        <fullName evidence="1">Fumarate reductase 15 kDa hydrophobic protein</fullName>
    </alternativeName>
    <alternativeName>
        <fullName evidence="1">Quinol-fumarate reductase subunit C</fullName>
        <shortName evidence="1">QFR subunit C</shortName>
    </alternativeName>
</protein>
<organism>
    <name type="scientific">Salmonella paratyphi B (strain ATCC BAA-1250 / SPB7)</name>
    <dbReference type="NCBI Taxonomy" id="1016998"/>
    <lineage>
        <taxon>Bacteria</taxon>
        <taxon>Pseudomonadati</taxon>
        <taxon>Pseudomonadota</taxon>
        <taxon>Gammaproteobacteria</taxon>
        <taxon>Enterobacterales</taxon>
        <taxon>Enterobacteriaceae</taxon>
        <taxon>Salmonella</taxon>
    </lineage>
</organism>
<accession>A9N410</accession>
<sequence>MTTKRKPYVRPMTSTWWKKLPFYRFYMLREGTAVPAVWFSIELIFGLFALKHGAESWMGFVGFLQNPVVVILNLITLAAALLHTKTWFELAPKAANIIVKDEKMGPEPIIKGLWVVTAVVTVVILYVALFW</sequence>
<keyword id="KW-0997">Cell inner membrane</keyword>
<keyword id="KW-1003">Cell membrane</keyword>
<keyword id="KW-0472">Membrane</keyword>
<keyword id="KW-0812">Transmembrane</keyword>
<keyword id="KW-1133">Transmembrane helix</keyword>
<comment type="function">
    <text evidence="1">Two distinct, membrane-bound, FAD-containing enzymes are responsible for the catalysis of fumarate and succinate interconversion; fumarate reductase is used in anaerobic growth, and succinate dehydrogenase is used in aerobic growth. Anchors the catalytic components of the fumarate reductase complex to the cell inner membrane, binds quinones.</text>
</comment>
<comment type="subunit">
    <text evidence="1">Part of an enzyme complex containing four subunits: a flavoprotein (FrdA), an iron-sulfur protein (FrdB), and two hydrophobic anchor proteins (FrdC and FrdD).</text>
</comment>
<comment type="subcellular location">
    <subcellularLocation>
        <location evidence="1">Cell inner membrane</location>
        <topology evidence="1">Multi-pass membrane protein</topology>
    </subcellularLocation>
</comment>
<comment type="similarity">
    <text evidence="1">Belongs to the FrdC family.</text>
</comment>
<proteinExistence type="inferred from homology"/>
<gene>
    <name evidence="1" type="primary">frdC</name>
    <name type="ordered locus">SPAB_05472</name>
</gene>
<reference key="1">
    <citation type="submission" date="2007-11" db="EMBL/GenBank/DDBJ databases">
        <authorList>
            <consortium name="The Salmonella enterica serovar Paratyphi B Genome Sequencing Project"/>
            <person name="McClelland M."/>
            <person name="Sanderson E.K."/>
            <person name="Porwollik S."/>
            <person name="Spieth J."/>
            <person name="Clifton W.S."/>
            <person name="Fulton R."/>
            <person name="Cordes M."/>
            <person name="Wollam A."/>
            <person name="Shah N."/>
            <person name="Pepin K."/>
            <person name="Bhonagiri V."/>
            <person name="Nash W."/>
            <person name="Johnson M."/>
            <person name="Thiruvilangam P."/>
            <person name="Wilson R."/>
        </authorList>
    </citation>
    <scope>NUCLEOTIDE SEQUENCE [LARGE SCALE GENOMIC DNA]</scope>
    <source>
        <strain>ATCC BAA-1250 / SPB7</strain>
    </source>
</reference>
<name>FRDC_SALPB</name>
<evidence type="ECO:0000255" key="1">
    <source>
        <dbReference type="HAMAP-Rule" id="MF_00708"/>
    </source>
</evidence>